<dbReference type="EMBL" id="L27651">
    <property type="protein sequence ID" value="AAA57157.1"/>
    <property type="molecule type" value="mRNA"/>
</dbReference>
<dbReference type="EMBL" id="AY816233">
    <property type="protein sequence ID" value="AAV66454.1"/>
    <property type="molecule type" value="mRNA"/>
</dbReference>
<dbReference type="RefSeq" id="NP_445989.2">
    <property type="nucleotide sequence ID" value="NM_053537.2"/>
</dbReference>
<dbReference type="SMR" id="Q5RLM2"/>
<dbReference type="FunCoup" id="Q5RLM2">
    <property type="interactions" value="9"/>
</dbReference>
<dbReference type="STRING" id="10116.ENSRNOP00000025094"/>
<dbReference type="BindingDB" id="Q5RLM2"/>
<dbReference type="ChEMBL" id="CHEMBL2073671"/>
<dbReference type="TCDB" id="2.A.1.19.15">
    <property type="family name" value="the major facilitator superfamily (mfs)"/>
</dbReference>
<dbReference type="PhosphoSitePlus" id="Q5RLM2"/>
<dbReference type="PaxDb" id="10116-ENSRNOP00000025094"/>
<dbReference type="Ensembl" id="ENSRNOT00000025094.6">
    <property type="protein sequence ID" value="ENSRNOP00000025094.3"/>
    <property type="gene ID" value="ENSRNOG00000018420.8"/>
</dbReference>
<dbReference type="GeneID" id="89776"/>
<dbReference type="KEGG" id="rno:89776"/>
<dbReference type="UCSC" id="RGD:621699">
    <property type="organism name" value="rat"/>
</dbReference>
<dbReference type="AGR" id="RGD:621699"/>
<dbReference type="CTD" id="10864"/>
<dbReference type="RGD" id="621699">
    <property type="gene designation" value="Slc22a7"/>
</dbReference>
<dbReference type="eggNOG" id="KOG0255">
    <property type="taxonomic scope" value="Eukaryota"/>
</dbReference>
<dbReference type="GeneTree" id="ENSGT00940000154922"/>
<dbReference type="HOGENOM" id="CLU_001265_33_3_1"/>
<dbReference type="InParanoid" id="Q5RLM2"/>
<dbReference type="OMA" id="AWMVIFF"/>
<dbReference type="OrthoDB" id="2544694at2759"/>
<dbReference type="PhylomeDB" id="Q5RLM2"/>
<dbReference type="TreeFam" id="TF315847"/>
<dbReference type="Reactome" id="R-RNO-561048">
    <property type="pathway name" value="Organic anion transport"/>
</dbReference>
<dbReference type="Reactome" id="R-RNO-9749641">
    <property type="pathway name" value="Aspirin ADME"/>
</dbReference>
<dbReference type="SABIO-RK" id="Q5RLM2"/>
<dbReference type="PRO" id="PR:Q5RLM2"/>
<dbReference type="Proteomes" id="UP000002494">
    <property type="component" value="Chromosome 9"/>
</dbReference>
<dbReference type="Bgee" id="ENSRNOG00000018420">
    <property type="expression patterns" value="Expressed in liver and 6 other cell types or tissues"/>
</dbReference>
<dbReference type="GO" id="GO:0016324">
    <property type="term" value="C:apical plasma membrane"/>
    <property type="evidence" value="ECO:0000314"/>
    <property type="project" value="UniProtKB"/>
</dbReference>
<dbReference type="GO" id="GO:0009925">
    <property type="term" value="C:basal plasma membrane"/>
    <property type="evidence" value="ECO:0000250"/>
    <property type="project" value="UniProtKB"/>
</dbReference>
<dbReference type="GO" id="GO:0016323">
    <property type="term" value="C:basolateral plasma membrane"/>
    <property type="evidence" value="ECO:0000314"/>
    <property type="project" value="UniProtKB"/>
</dbReference>
<dbReference type="GO" id="GO:0005886">
    <property type="term" value="C:plasma membrane"/>
    <property type="evidence" value="ECO:0000266"/>
    <property type="project" value="RGD"/>
</dbReference>
<dbReference type="GO" id="GO:0015139">
    <property type="term" value="F:alpha-ketoglutarate transmembrane transporter activity"/>
    <property type="evidence" value="ECO:0000250"/>
    <property type="project" value="UniProtKB"/>
</dbReference>
<dbReference type="GO" id="GO:0008514">
    <property type="term" value="F:organic anion transmembrane transporter activity"/>
    <property type="evidence" value="ECO:0000314"/>
    <property type="project" value="UniProtKB"/>
</dbReference>
<dbReference type="GO" id="GO:0015132">
    <property type="term" value="F:prostaglandin transmembrane transporter activity"/>
    <property type="evidence" value="ECO:0000314"/>
    <property type="project" value="UniProtKB"/>
</dbReference>
<dbReference type="GO" id="GO:0015347">
    <property type="term" value="F:sodium-independent organic anion transmembrane transporter activity"/>
    <property type="evidence" value="ECO:0000314"/>
    <property type="project" value="UniProtKB"/>
</dbReference>
<dbReference type="GO" id="GO:0022857">
    <property type="term" value="F:transmembrane transporter activity"/>
    <property type="evidence" value="ECO:0000266"/>
    <property type="project" value="RGD"/>
</dbReference>
<dbReference type="GO" id="GO:0015742">
    <property type="term" value="P:alpha-ketoglutarate transport"/>
    <property type="evidence" value="ECO:0000250"/>
    <property type="project" value="UniProtKB"/>
</dbReference>
<dbReference type="GO" id="GO:0006811">
    <property type="term" value="P:monoatomic ion transport"/>
    <property type="evidence" value="ECO:0007669"/>
    <property type="project" value="UniProtKB-KW"/>
</dbReference>
<dbReference type="GO" id="GO:0015711">
    <property type="term" value="P:organic anion transport"/>
    <property type="evidence" value="ECO:0000314"/>
    <property type="project" value="RGD"/>
</dbReference>
<dbReference type="GO" id="GO:0015732">
    <property type="term" value="P:prostaglandin transport"/>
    <property type="evidence" value="ECO:0000314"/>
    <property type="project" value="UniProtKB"/>
</dbReference>
<dbReference type="GO" id="GO:0035634">
    <property type="term" value="P:response to stilbenoid"/>
    <property type="evidence" value="ECO:0000266"/>
    <property type="project" value="RGD"/>
</dbReference>
<dbReference type="FunFam" id="1.20.1250.20:FF:000170">
    <property type="entry name" value="Solute carrier family 22 member 7"/>
    <property type="match status" value="1"/>
</dbReference>
<dbReference type="Gene3D" id="1.20.1250.20">
    <property type="entry name" value="MFS general substrate transporter like domains"/>
    <property type="match status" value="1"/>
</dbReference>
<dbReference type="InterPro" id="IPR020846">
    <property type="entry name" value="MFS_dom"/>
</dbReference>
<dbReference type="InterPro" id="IPR005828">
    <property type="entry name" value="MFS_sugar_transport-like"/>
</dbReference>
<dbReference type="InterPro" id="IPR036259">
    <property type="entry name" value="MFS_trans_sf"/>
</dbReference>
<dbReference type="InterPro" id="IPR004749">
    <property type="entry name" value="Orgcat_transp/SVOP"/>
</dbReference>
<dbReference type="NCBIfam" id="TIGR00898">
    <property type="entry name" value="2A0119"/>
    <property type="match status" value="1"/>
</dbReference>
<dbReference type="PANTHER" id="PTHR24064">
    <property type="entry name" value="SOLUTE CARRIER FAMILY 22 MEMBER"/>
    <property type="match status" value="1"/>
</dbReference>
<dbReference type="Pfam" id="PF00083">
    <property type="entry name" value="Sugar_tr"/>
    <property type="match status" value="1"/>
</dbReference>
<dbReference type="SUPFAM" id="SSF103473">
    <property type="entry name" value="MFS general substrate transporter"/>
    <property type="match status" value="1"/>
</dbReference>
<dbReference type="PROSITE" id="PS50850">
    <property type="entry name" value="MFS"/>
    <property type="match status" value="1"/>
</dbReference>
<evidence type="ECO:0000250" key="1">
    <source>
        <dbReference type="UniProtKB" id="Q91WU2"/>
    </source>
</evidence>
<evidence type="ECO:0000250" key="2">
    <source>
        <dbReference type="UniProtKB" id="Q9Y694"/>
    </source>
</evidence>
<evidence type="ECO:0000255" key="3"/>
<evidence type="ECO:0000269" key="4">
    <source>
    </source>
</evidence>
<evidence type="ECO:0000269" key="5">
    <source>
    </source>
</evidence>
<evidence type="ECO:0000269" key="6">
    <source>
    </source>
</evidence>
<evidence type="ECO:0000269" key="7">
    <source>
    </source>
</evidence>
<evidence type="ECO:0000269" key="8">
    <source>
    </source>
</evidence>
<evidence type="ECO:0000269" key="9">
    <source>
    </source>
</evidence>
<evidence type="ECO:0000269" key="10">
    <source>
    </source>
</evidence>
<evidence type="ECO:0000303" key="11">
    <source>
    </source>
</evidence>
<evidence type="ECO:0000303" key="12">
    <source>
    </source>
</evidence>
<evidence type="ECO:0000303" key="13">
    <source>
    </source>
</evidence>
<evidence type="ECO:0000305" key="14"/>
<evidence type="ECO:0000312" key="15">
    <source>
        <dbReference type="RGD" id="621699"/>
    </source>
</evidence>
<keyword id="KW-1003">Cell membrane</keyword>
<keyword id="KW-0406">Ion transport</keyword>
<keyword id="KW-0472">Membrane</keyword>
<keyword id="KW-1185">Reference proteome</keyword>
<keyword id="KW-0812">Transmembrane</keyword>
<keyword id="KW-1133">Transmembrane helix</keyword>
<keyword id="KW-0813">Transport</keyword>
<sequence>MGFEDLLDKVGGFGPFQLRNLVLMALPRMLLPMHFLLPVFMAAVPAHHCALPGAPANLSHQDLWLEAHLPRETDGSFSSCLRFAYPQTVPNVTLGTEVSNSGEPEGEPLTVPCSQGWEYDRSEFSSTIATEWDLVCQQRGLNKITSTCFFIGVLVGAVVYGYLSDRFGRRRLLLVAYVSSLVLGLMSAASINYIMFVVTRTLTGSALAGFTIIVLPLELEWLDVEHRTVAGVISTVFWSGGVLLLALVGYLIRSWRWLLLAATLPCVPGIISIWWVPESARWLLTQGRVEEAKKYLLSCAKLNGRPVGEGSLSQEALNNVVTMERALQRPSYLDLFRTSQLRHISLCCMMVWFGVNFSYYGLTLDVSGLGLNVYQTQLLFGAVELPSKIMVYFLVRRLGRRLTEAGMLLGAALTFGTSLLVSLETKSWITALVVVGKAFSEAAFTTAYLFTSELYPTVLRQTGLGLTALMGRLGASLAPLAALLDGVWLLLPKVAYGGIALVAACTALLLPETKKAQLPETIQDVERKSTQEEDV</sequence>
<name>S22A7_RAT</name>
<comment type="function">
    <text evidence="2 4 5 7 8 10">Functions as a Na(+)-independent bidirectional multispecific transporter (PubMed:11504818, PubMed:15900017, PubMed:21446918, PubMed:9650585). Contributes to the renal and hepatic elimination of endogenous organic compounds from the systemic circulation into the urine and bile, respectively (PubMed:25904762). Capable of transporting a wide range of purine and pyrimidine nucleobases, nucleosides, and nucleotides with cGMP, 2'deoxyguanosine and GMP being the preferred substrates (By similarity). Functions as a pH- and chloride-independent cGMP bidirectional facilitative transporter that can regulate both intracellular and extracellular levels of cGMP and may be involved in cGMP signaling pathways (By similarity). Mediates orotate/glutamate bidirectional exchange and most likely display a physiological role in hepatic release of glutamate into the blood (PubMed:21446918). Involved in renal secretion and possible reabsorption of creatinine (By similarity). Able to uptake prostaglandin E2 (PGE2) and may contribute to PGE2 renal excretion (PubMed:11504818, PubMed:9650585). Also transports alpha-ketoglutarate and urate (PubMed:9650585). Apart from the orotate/glutamate exchange, the counterions for the uptake of other SLC22A7/OAT2 substrates remain to be identified (By similarity).</text>
</comment>
<comment type="catalytic activity">
    <reaction evidence="7">
        <text>orotate(out) + L-glutamate(in) = orotate(in) + L-glutamate(out)</text>
        <dbReference type="Rhea" id="RHEA:72043"/>
        <dbReference type="ChEBI" id="CHEBI:29985"/>
        <dbReference type="ChEBI" id="CHEBI:30839"/>
    </reaction>
</comment>
<comment type="catalytic activity">
    <reaction evidence="2">
        <text>3',5'-cyclic GMP(in) = 3',5'-cyclic GMP(out)</text>
        <dbReference type="Rhea" id="RHEA:76207"/>
        <dbReference type="ChEBI" id="CHEBI:57746"/>
    </reaction>
</comment>
<comment type="catalytic activity">
    <reaction evidence="2">
        <text>GMP(in) = GMP(out)</text>
        <dbReference type="Rhea" id="RHEA:76211"/>
        <dbReference type="ChEBI" id="CHEBI:58115"/>
    </reaction>
</comment>
<comment type="catalytic activity">
    <reaction evidence="2">
        <text>2'-deoxyguanosine(in) = 2'-deoxyguanosine(out)</text>
        <dbReference type="Rhea" id="RHEA:76215"/>
        <dbReference type="ChEBI" id="CHEBI:17172"/>
    </reaction>
</comment>
<comment type="catalytic activity">
    <reaction evidence="2">
        <text>GDP(in) = GDP(out)</text>
        <dbReference type="Rhea" id="RHEA:76219"/>
        <dbReference type="ChEBI" id="CHEBI:58189"/>
    </reaction>
</comment>
<comment type="catalytic activity">
    <reaction evidence="2">
        <text>guanosine(in) = guanosine(out)</text>
        <dbReference type="Rhea" id="RHEA:75371"/>
        <dbReference type="ChEBI" id="CHEBI:16750"/>
    </reaction>
</comment>
<comment type="catalytic activity">
    <reaction evidence="2">
        <text>GTP(in) = GTP(out)</text>
        <dbReference type="Rhea" id="RHEA:75787"/>
        <dbReference type="ChEBI" id="CHEBI:37565"/>
    </reaction>
</comment>
<comment type="catalytic activity">
    <reaction evidence="2">
        <text>3',5'-cyclic AMP(in) = 3',5'-cyclic AMP(out)</text>
        <dbReference type="Rhea" id="RHEA:76223"/>
        <dbReference type="ChEBI" id="CHEBI:58165"/>
    </reaction>
</comment>
<comment type="catalytic activity">
    <reaction evidence="2">
        <text>creatinine(in) = creatinine(out)</text>
        <dbReference type="Rhea" id="RHEA:74539"/>
        <dbReference type="ChEBI" id="CHEBI:16737"/>
    </reaction>
</comment>
<comment type="catalytic activity">
    <reaction evidence="4 10">
        <text>prostaglandin E2(out) = prostaglandin E2(in)</text>
        <dbReference type="Rhea" id="RHEA:50984"/>
        <dbReference type="ChEBI" id="CHEBI:606564"/>
    </reaction>
</comment>
<comment type="catalytic activity">
    <reaction evidence="10">
        <text>2-oxoglutarate(in) = 2-oxoglutarate(out)</text>
        <dbReference type="Rhea" id="RHEA:76231"/>
        <dbReference type="ChEBI" id="CHEBI:16810"/>
    </reaction>
</comment>
<comment type="catalytic activity">
    <reaction evidence="1">
        <text>glutarate(in) = glutarate(out)</text>
        <dbReference type="Rhea" id="RHEA:76251"/>
        <dbReference type="ChEBI" id="CHEBI:30921"/>
    </reaction>
</comment>
<comment type="catalytic activity">
    <reaction evidence="2">
        <text>urate(out) = urate(in)</text>
        <dbReference type="Rhea" id="RHEA:60368"/>
        <dbReference type="ChEBI" id="CHEBI:17775"/>
    </reaction>
</comment>
<comment type="catalytic activity">
    <reaction evidence="2">
        <text>estrone 3-sulfate(out) = estrone 3-sulfate(in)</text>
        <dbReference type="Rhea" id="RHEA:71835"/>
        <dbReference type="ChEBI" id="CHEBI:60050"/>
    </reaction>
</comment>
<comment type="biophysicochemical properties">
    <kinetics>
        <KM evidence="4">38.5 uM for prostaglandin E2</KM>
        <KM evidence="7">200 uM for orotate</KM>
        <KM evidence="7">1200 uM for glutamate</KM>
        <Vmax evidence="4">520.0 nmol/min/mg protein for prostaglandin E2 uptake</Vmax>
        <Vmax evidence="7">13.2 nmol/min/mg protein for orotate uptake</Vmax>
        <Vmax evidence="7">39.0 nmol/min/mg protein for glutamate uptake</Vmax>
    </kinetics>
</comment>
<comment type="subcellular location">
    <subcellularLocation>
        <location evidence="9">Basolateral cell membrane</location>
        <topology evidence="14">Multi-pass membrane protein</topology>
    </subcellularLocation>
    <subcellularLocation>
        <location evidence="8">Apical cell membrane</location>
        <topology evidence="14">Multi-pass membrane protein</topology>
    </subcellularLocation>
    <subcellularLocation>
        <location evidence="2">Cell membrane</location>
        <topology evidence="14">Multi-pass membrane protein</topology>
    </subcellularLocation>
    <text evidence="8 9">Located to the sinusoidal/basolateral membrane of hepatocytes (PubMed:8056831). Apical side of the renal tubule (PubMed:25904762).</text>
</comment>
<comment type="tissue specificity">
    <text evidence="4 6 7 8 9 10">Expressed in liver and kidney (PubMed:11504818, PubMed:16885152, PubMed:21446918, PubMed:25904762, PubMed:8056831, PubMed:9650585). Expressed at low levels in adipose tissue (PubMed:8056831). Expressed in fetal liver (PubMed:8056831). In kidney, expressed at the brush border of the proximal tubule S3 segment (S3) in the outer stripe and medullary rays (PubMed:16885152, PubMed:25904762). In kidney, expression is higher in female than male (PubMed:16885152).</text>
</comment>
<comment type="induction">
    <text evidence="6">Strongly inhibited by androgen, and weakly stimulated by estrogen and progesterone, which results in gender differences (female &gt; male) that appears in puberty, for expression in kidney.</text>
</comment>
<comment type="miscellaneous">
    <text evidence="4 5 10">Involved in the uptake of clinically used drugs such as ketoprofen, indomethacin and methotrexate, and contributes to renal and hepatic drug elimination.</text>
</comment>
<comment type="similarity">
    <text evidence="14">Belongs to the major facilitator (TC 2.A.1) superfamily. Organic cation transporter (TC 2.A.1.19) family.</text>
</comment>
<protein>
    <recommendedName>
        <fullName evidence="11">Solute carrier family 22 member 7</fullName>
    </recommendedName>
    <alternativeName>
        <fullName evidence="12">Novel liver transporter</fullName>
    </alternativeName>
    <alternativeName>
        <fullName evidence="13">Organic anion transporter 2</fullName>
        <shortName evidence="11">rOAT2</shortName>
    </alternativeName>
</protein>
<proteinExistence type="evidence at protein level"/>
<reference key="1">
    <citation type="journal article" date="1994" name="J. Cell Sci.">
        <title>Molecular cloning and characterization of a novel liver-specific transport protein.</title>
        <authorList>
            <person name="Simonson G.D."/>
            <person name="Vincent A.C."/>
            <person name="Roberg K.J."/>
            <person name="Huang Y."/>
            <person name="Iwanij V."/>
        </authorList>
    </citation>
    <scope>NUCLEOTIDE SEQUENCE [MRNA]</scope>
    <scope>SUBCELLULAR LOCATION</scope>
    <scope>TISSUE SPECIFICITY</scope>
    <source>
        <strain>Sprague-Dawley</strain>
        <tissue>Liver</tissue>
    </source>
</reference>
<reference key="2">
    <citation type="submission" date="2004-11" db="EMBL/GenBank/DDBJ databases">
        <title>A novel rat organic anion transporter 2.</title>
        <authorList>
            <person name="Bourgea J."/>
            <person name="White E.P."/>
            <person name="Patten C.J."/>
            <person name="Crespi C.L."/>
            <person name="Xiao G."/>
        </authorList>
    </citation>
    <scope>NUCLEOTIDE SEQUENCE [MRNA]</scope>
    <source>
        <strain>Sprague-Dawley</strain>
    </source>
</reference>
<reference key="3">
    <citation type="journal article" date="1998" name="FEBS Lett.">
        <title>Identification of multispecific organic anion transporter 2 expressed predominantly in the liver.</title>
        <authorList>
            <person name="Sekine T."/>
            <person name="Cha S.H."/>
            <person name="Tsuda M."/>
            <person name="Apiwattanakul N."/>
            <person name="Nakajima N."/>
            <person name="Kanai Y."/>
            <person name="Endou H."/>
        </authorList>
    </citation>
    <scope>FUNCTION</scope>
    <scope>TRANSPORTER ACTIVITY</scope>
    <scope>TISSUE SPECIFICITY</scope>
    <scope>MISCELLANEOUS</scope>
</reference>
<reference key="4">
    <citation type="journal article" date="2001" name="J. Pharmacol. Exp. Ther.">
        <title>Functional characterization of rat organic anion transporter 2 in LLC-PK1 cells.</title>
        <authorList>
            <person name="Morita N."/>
            <person name="Kusuhara H."/>
            <person name="Sekine T."/>
            <person name="Endou H."/>
            <person name="Sugiyama Y."/>
        </authorList>
    </citation>
    <scope>FUNCTION</scope>
    <scope>TRANSPORTER ACTIVITY</scope>
    <scope>BIOPHYSICOCHEMICAL PROPERTIES</scope>
    <scope>TISSUE SPECIFICITY</scope>
    <scope>MISCELLANEOUS</scope>
</reference>
<reference key="5">
    <citation type="journal article" date="2005" name="Drug Metab. Dispos.">
        <title>Functional involvement of rat organic anion transporter 2 (Slc22a7) in the hepatic uptake of the nonsteroidal anti-inflammatory drug ketoprofen.</title>
        <authorList>
            <person name="Morita N."/>
            <person name="Kusuhara H."/>
            <person name="Nozaki Y."/>
            <person name="Endou H."/>
            <person name="Sugiyama Y."/>
        </authorList>
    </citation>
    <scope>FUNCTION</scope>
    <scope>MISCELLANEOUS</scope>
</reference>
<reference key="6">
    <citation type="journal article" date="2007" name="Am. J. Physiol.">
        <title>Renal expression of organic anion transporter OAT2 in rats and mice is regulated by sex hormones.</title>
        <authorList>
            <person name="Ljubojevic M."/>
            <person name="Balen D."/>
            <person name="Breljak D."/>
            <person name="Kusan M."/>
            <person name="Anzai N."/>
            <person name="Bahn A."/>
            <person name="Burckhardt G."/>
            <person name="Sabolic I."/>
        </authorList>
    </citation>
    <scope>INDUCTION</scope>
    <scope>TISSUE SPECIFICITY</scope>
</reference>
<reference key="7">
    <citation type="journal article" date="2011" name="Biochem. J.">
        <title>OAT2 catalyses efflux of glutamate and uptake of orotic acid.</title>
        <authorList>
            <person name="Fork C."/>
            <person name="Bauer T."/>
            <person name="Golz S."/>
            <person name="Geerts A."/>
            <person name="Weiland J."/>
            <person name="Del Turco D."/>
            <person name="Schoemig E."/>
            <person name="Gruendemann D."/>
        </authorList>
    </citation>
    <scope>FUNCTION</scope>
    <scope>TRANSPORTER ACTIVITY</scope>
    <scope>BIOPHYSICOCHEMICAL PROPERTIES</scope>
</reference>
<reference key="8">
    <citation type="journal article" date="2015" name="Drug Metab. Dispos.">
        <title>Characterization of Organic Anion Transporter 2 (SLC22A7): A Highly Efficient Transporter for Creatinine and Species-Dependent Renal Tubular Expression.</title>
        <authorList>
            <person name="Shen H."/>
            <person name="Liu T."/>
            <person name="Morse B.L."/>
            <person name="Zhao Y."/>
            <person name="Zhang Y."/>
            <person name="Qiu X."/>
            <person name="Chen C."/>
            <person name="Lewin A.C."/>
            <person name="Wang X.T."/>
            <person name="Liu G."/>
            <person name="Christopher L.J."/>
            <person name="Marathe P."/>
            <person name="Lai Y."/>
        </authorList>
    </citation>
    <scope>TISSUE SPECIFICITY</scope>
    <scope>SUBCELLULAR LOCATION</scope>
</reference>
<gene>
    <name evidence="15" type="primary">Slc22a7</name>
    <name type="synonym">Nlt</name>
    <name type="synonym">Oat2</name>
</gene>
<accession>Q5RLM2</accession>
<accession>Q63314</accession>
<organism>
    <name type="scientific">Rattus norvegicus</name>
    <name type="common">Rat</name>
    <dbReference type="NCBI Taxonomy" id="10116"/>
    <lineage>
        <taxon>Eukaryota</taxon>
        <taxon>Metazoa</taxon>
        <taxon>Chordata</taxon>
        <taxon>Craniata</taxon>
        <taxon>Vertebrata</taxon>
        <taxon>Euteleostomi</taxon>
        <taxon>Mammalia</taxon>
        <taxon>Eutheria</taxon>
        <taxon>Euarchontoglires</taxon>
        <taxon>Glires</taxon>
        <taxon>Rodentia</taxon>
        <taxon>Myomorpha</taxon>
        <taxon>Muroidea</taxon>
        <taxon>Muridae</taxon>
        <taxon>Murinae</taxon>
        <taxon>Rattus</taxon>
    </lineage>
</organism>
<feature type="chain" id="PRO_0000317486" description="Solute carrier family 22 member 7">
    <location>
        <begin position="1"/>
        <end position="535"/>
    </location>
</feature>
<feature type="transmembrane region" description="Helical" evidence="3">
    <location>
        <begin position="21"/>
        <end position="41"/>
    </location>
</feature>
<feature type="transmembrane region" description="Helical" evidence="3">
    <location>
        <begin position="144"/>
        <end position="164"/>
    </location>
</feature>
<feature type="transmembrane region" description="Helical" evidence="3">
    <location>
        <begin position="178"/>
        <end position="198"/>
    </location>
</feature>
<feature type="transmembrane region" description="Helical" evidence="3">
    <location>
        <begin position="202"/>
        <end position="222"/>
    </location>
</feature>
<feature type="transmembrane region" description="Helical" evidence="3">
    <location>
        <begin position="232"/>
        <end position="252"/>
    </location>
</feature>
<feature type="transmembrane region" description="Helical" evidence="3">
    <location>
        <begin position="257"/>
        <end position="277"/>
    </location>
</feature>
<feature type="transmembrane region" description="Helical" evidence="3">
    <location>
        <begin position="344"/>
        <end position="364"/>
    </location>
</feature>
<feature type="transmembrane region" description="Helical" evidence="3">
    <location>
        <begin position="375"/>
        <end position="395"/>
    </location>
</feature>
<feature type="transmembrane region" description="Helical" evidence="3">
    <location>
        <begin position="402"/>
        <end position="422"/>
    </location>
</feature>
<feature type="transmembrane region" description="Helical" evidence="3">
    <location>
        <begin position="429"/>
        <end position="449"/>
    </location>
</feature>
<feature type="transmembrane region" description="Helical" evidence="3">
    <location>
        <begin position="464"/>
        <end position="484"/>
    </location>
</feature>
<feature type="transmembrane region" description="Helical" evidence="3">
    <location>
        <begin position="489"/>
        <end position="509"/>
    </location>
</feature>
<feature type="sequence conflict" description="In Ref. 1; AAA57157." evidence="14" ref="1">
    <original>P</original>
    <variation>R</variation>
    <location>
        <position position="479"/>
    </location>
</feature>